<name>CHLG_AVESA</name>
<dbReference type="EC" id="2.5.1.62"/>
<dbReference type="EMBL" id="AJ277210">
    <property type="protein sequence ID" value="CAB85464.1"/>
    <property type="molecule type" value="mRNA"/>
</dbReference>
<dbReference type="SMR" id="Q9M3W5"/>
<dbReference type="EnsemblPlants" id="AVESA.00001b.r3.1Cg0001702.6">
    <property type="protein sequence ID" value="cds.AVESA.00001b.r3.1Cg0001702.6"/>
    <property type="gene ID" value="AVESA.00001b.r3.1Cg0001702"/>
</dbReference>
<dbReference type="EnsemblPlants" id="AVESA.00010b.r2.1CG0082590.1">
    <property type="protein sequence ID" value="AVESA.00010b.r2.1CG0082590.1.CDS"/>
    <property type="gene ID" value="AVESA.00010b.r2.1CG0082590"/>
</dbReference>
<dbReference type="Gramene" id="AVESA.00001b.r3.1Cg0001702.6">
    <property type="protein sequence ID" value="cds.AVESA.00001b.r3.1Cg0001702.6"/>
    <property type="gene ID" value="AVESA.00001b.r3.1Cg0001702"/>
</dbReference>
<dbReference type="Gramene" id="AVESA.00010b.r2.1CG0082590.1">
    <property type="protein sequence ID" value="AVESA.00010b.r2.1CG0082590.1.CDS"/>
    <property type="gene ID" value="AVESA.00010b.r2.1CG0082590"/>
</dbReference>
<dbReference type="KEGG" id="ag:CAB85464"/>
<dbReference type="BioCyc" id="MetaCyc:MONOMER-11751"/>
<dbReference type="GO" id="GO:0031969">
    <property type="term" value="C:chloroplast membrane"/>
    <property type="evidence" value="ECO:0007669"/>
    <property type="project" value="UniProtKB-SubCell"/>
</dbReference>
<dbReference type="GO" id="GO:0046408">
    <property type="term" value="F:chlorophyll synthetase activity"/>
    <property type="evidence" value="ECO:0007669"/>
    <property type="project" value="UniProtKB-EC"/>
</dbReference>
<dbReference type="GO" id="GO:0015995">
    <property type="term" value="P:chlorophyll biosynthetic process"/>
    <property type="evidence" value="ECO:0007669"/>
    <property type="project" value="UniProtKB-KW"/>
</dbReference>
<dbReference type="CDD" id="cd13958">
    <property type="entry name" value="PT_UbiA_chlorophyll"/>
    <property type="match status" value="1"/>
</dbReference>
<dbReference type="FunFam" id="1.10.357.140:FF:000015">
    <property type="entry name" value="Chlorophyll synthase, chloroplastic"/>
    <property type="match status" value="1"/>
</dbReference>
<dbReference type="Gene3D" id="1.10.357.140">
    <property type="entry name" value="UbiA prenyltransferase"/>
    <property type="match status" value="1"/>
</dbReference>
<dbReference type="Gene3D" id="1.20.120.1780">
    <property type="entry name" value="UbiA prenyltransferase"/>
    <property type="match status" value="1"/>
</dbReference>
<dbReference type="InterPro" id="IPR006372">
    <property type="entry name" value="Chl_synth"/>
</dbReference>
<dbReference type="InterPro" id="IPR011799">
    <property type="entry name" value="ChlG"/>
</dbReference>
<dbReference type="InterPro" id="IPR050475">
    <property type="entry name" value="Prenyltransferase_related"/>
</dbReference>
<dbReference type="InterPro" id="IPR000537">
    <property type="entry name" value="UbiA_prenyltransferase"/>
</dbReference>
<dbReference type="InterPro" id="IPR044878">
    <property type="entry name" value="UbiA_sf"/>
</dbReference>
<dbReference type="NCBIfam" id="TIGR02056">
    <property type="entry name" value="ChlG"/>
    <property type="match status" value="1"/>
</dbReference>
<dbReference type="NCBIfam" id="TIGR01476">
    <property type="entry name" value="chlor_syn_BchG"/>
    <property type="match status" value="1"/>
</dbReference>
<dbReference type="NCBIfam" id="NF005742">
    <property type="entry name" value="PRK07566.1"/>
    <property type="match status" value="1"/>
</dbReference>
<dbReference type="PANTHER" id="PTHR42723">
    <property type="entry name" value="CHLOROPHYLL SYNTHASE"/>
    <property type="match status" value="1"/>
</dbReference>
<dbReference type="PANTHER" id="PTHR42723:SF1">
    <property type="entry name" value="CHLOROPHYLL SYNTHASE, CHLOROPLASTIC"/>
    <property type="match status" value="1"/>
</dbReference>
<dbReference type="Pfam" id="PF01040">
    <property type="entry name" value="UbiA"/>
    <property type="match status" value="1"/>
</dbReference>
<accession>Q9M3W5</accession>
<feature type="transit peptide" description="Chloroplast" evidence="1">
    <location>
        <begin position="1"/>
        <end position="45"/>
    </location>
</feature>
<feature type="chain" id="PRO_0000285116" description="Chlorophyll synthase, chloroplastic">
    <location>
        <begin position="46"/>
        <end position="378"/>
    </location>
</feature>
<feature type="transmembrane region" description="Helical" evidence="1">
    <location>
        <begin position="173"/>
        <end position="193"/>
    </location>
</feature>
<feature type="transmembrane region" description="Helical" evidence="1">
    <location>
        <begin position="199"/>
        <end position="219"/>
    </location>
</feature>
<feature type="transmembrane region" description="Helical" evidence="1">
    <location>
        <begin position="232"/>
        <end position="252"/>
    </location>
</feature>
<feature type="transmembrane region" description="Helical" evidence="1">
    <location>
        <begin position="257"/>
        <end position="277"/>
    </location>
</feature>
<feature type="transmembrane region" description="Helical" evidence="1">
    <location>
        <begin position="302"/>
        <end position="322"/>
    </location>
</feature>
<feature type="transmembrane region" description="Helical" evidence="1">
    <location>
        <begin position="327"/>
        <end position="347"/>
    </location>
</feature>
<feature type="transmembrane region" description="Helical" evidence="1">
    <location>
        <begin position="357"/>
        <end position="377"/>
    </location>
</feature>
<feature type="mutagenesis site" description="Total loss of activity." evidence="2">
    <original>R</original>
    <variation>A</variation>
    <location>
        <position position="91"/>
    </location>
</feature>
<feature type="mutagenesis site" description="Reduces activity by 90%." evidence="2">
    <original>C</original>
    <variation>A</variation>
    <location>
        <position position="109"/>
    </location>
</feature>
<feature type="mutagenesis site" description="Reduces activity by 70%." evidence="2">
    <original>C</original>
    <variation>A</variation>
    <location>
        <position position="130"/>
    </location>
</feature>
<feature type="mutagenesis site" description="No effect." evidence="2">
    <original>C</original>
    <variation>A</variation>
    <location>
        <position position="137"/>
    </location>
</feature>
<feature type="mutagenesis site" description="Total loss of activity." evidence="3">
    <original>N</original>
    <variation>A</variation>
    <location>
        <position position="146"/>
    </location>
</feature>
<feature type="mutagenesis site" description="Total loss of activity." evidence="3">
    <original>D</original>
    <variation>A</variation>
    <location>
        <position position="147"/>
    </location>
</feature>
<feature type="mutagenesis site" description="Total loss of activity." evidence="3">
    <original>D</original>
    <variation>A</variation>
    <location>
        <position position="150"/>
    </location>
</feature>
<feature type="mutagenesis site" description="Reduces activity by 75%." evidence="2">
    <original>R</original>
    <variation>A</variation>
    <location>
        <position position="151"/>
    </location>
</feature>
<feature type="mutagenesis site" description="Total loss of activity." evidence="3">
    <original>D</original>
    <variation>A</variation>
    <location>
        <position position="154"/>
    </location>
</feature>
<feature type="mutagenesis site" description="Total loss of activity." evidence="2 3">
    <original>R</original>
    <variation>A</variation>
    <location>
        <position position="161"/>
    </location>
</feature>
<feature type="mutagenesis site" description="Reduces activity by 99%." evidence="2 3">
    <original>R</original>
    <variation>H</variation>
    <location>
        <position position="161"/>
    </location>
</feature>
<feature type="mutagenesis site" description="Reduces activity by 66%." evidence="2 3">
    <original>R</original>
    <variation>K</variation>
    <location>
        <position position="161"/>
    </location>
</feature>
<feature type="mutagenesis site" description="No effect." evidence="2">
    <original>C</original>
    <variation>A</variation>
    <location>
        <position position="262"/>
    </location>
</feature>
<feature type="mutagenesis site" description="No effect." evidence="2">
    <original>R</original>
    <variation>A</variation>
    <location>
        <position position="284"/>
    </location>
</feature>
<feature type="mutagenesis site" description="Loss of inhibition by N-phenylmaleimide, but no loss of activity." evidence="2">
    <original>C</original>
    <variation>A</variation>
    <location>
        <position position="304"/>
    </location>
</feature>
<comment type="function">
    <text evidence="2">Involved in one of the last steps of the biosynthesis of chlorophyll a. Catalyzes the esterification of chlorophillide a with either geranylgeranyldiphosphate (GGPP) or phytyldiphosphate (PhyPP). May also use with a lower efficiency the monophosphates GGMP and PhyMP, but not the non-phosphorylated alcohols geranylgeraniol and phytol. The tetraprenyl diphosphate must bind to the enzyme as the first substrate and esterification occurs when this pre-loaded enzyme meets the second substrate, chlorophyllide.</text>
</comment>
<comment type="catalytic activity">
    <reaction>
        <text>phytyl diphosphate + chlorophyllide a + H(+) = chlorophyll a + diphosphate</text>
        <dbReference type="Rhea" id="RHEA:17317"/>
        <dbReference type="ChEBI" id="CHEBI:15378"/>
        <dbReference type="ChEBI" id="CHEBI:33019"/>
        <dbReference type="ChEBI" id="CHEBI:58416"/>
        <dbReference type="ChEBI" id="CHEBI:75434"/>
        <dbReference type="ChEBI" id="CHEBI:83348"/>
        <dbReference type="EC" id="2.5.1.62"/>
    </reaction>
</comment>
<comment type="cofactor">
    <cofactor>
        <name>Mg(2+)</name>
        <dbReference type="ChEBI" id="CHEBI:18420"/>
    </cofactor>
    <cofactor>
        <name>Zn(2+)</name>
        <dbReference type="ChEBI" id="CHEBI:29105"/>
    </cofactor>
    <cofactor>
        <name>Mn(2+)</name>
        <dbReference type="ChEBI" id="CHEBI:29035"/>
    </cofactor>
    <text>Magnesium or zinc; or manganese at a lesser extent, but not calcium.</text>
</comment>
<comment type="activity regulation">
    <text>Inhibited by N-phenylmaleimide (NPM) and diacetyl.</text>
</comment>
<comment type="subcellular location">
    <subcellularLocation>
        <location evidence="4">Plastid</location>
        <location evidence="4">Chloroplast membrane</location>
        <topology evidence="4">Multi-pass membrane protein</topology>
    </subcellularLocation>
</comment>
<comment type="developmental stage">
    <text>Constitutively expressed in etiolated and green seedlings.</text>
</comment>
<comment type="domain">
    <text>The N-terminal part (1-87) is not required for enzymatic activity.</text>
</comment>
<comment type="domain">
    <text>Amino acid residues 138-160 are probably part of the polyprenyl diphosphate-binding domain.</text>
</comment>
<comment type="similarity">
    <text evidence="4">Belongs to the UbiA prenyltransferase family. Chlorophyll synthase subfamily.</text>
</comment>
<reference key="1">
    <citation type="journal article" date="2001" name="Biol. Chem.">
        <title>Cloning and characterisation of chlorophyll synthase from Avena sativa.</title>
        <authorList>
            <person name="Schmid H.C."/>
            <person name="Oster U."/>
            <person name="Koegel J."/>
            <person name="Lenz S."/>
            <person name="Ruediger W."/>
        </authorList>
    </citation>
    <scope>NUCLEOTIDE SEQUENCE [MRNA]</scope>
    <scope>FUNCTION</scope>
    <scope>INHIBITION BY N-PHENYLMALEIMIDE AND DIACETYL</scope>
    <scope>MUTAGENESIS OF ARG-91; CYS-109; CYS-130; CYS-137; ARG-151; ARG-161; CYS-262; ARG-284 AND CYS-304</scope>
</reference>
<reference key="2">
    <citation type="journal article" date="2002" name="Biol. Chem.">
        <title>Pre-loading of chlorophyll synthase with tetraprenyl diphosphate is an obligatory step in chlorophyll biosynthesis.</title>
        <authorList>
            <person name="Schmid H.C."/>
            <person name="Rassadina V."/>
            <person name="Oster U."/>
            <person name="Schoch S."/>
            <person name="Ruediger W."/>
        </authorList>
    </citation>
    <scope>CHARACTERIZATION</scope>
    <scope>MUTAGENESIS OF ASN-146; ASP-147; ASP-150; ASP-154 AND ARG-161</scope>
    <source>
        <strain>cv. Pirol</strain>
    </source>
</reference>
<organism>
    <name type="scientific">Avena sativa</name>
    <name type="common">Oat</name>
    <dbReference type="NCBI Taxonomy" id="4498"/>
    <lineage>
        <taxon>Eukaryota</taxon>
        <taxon>Viridiplantae</taxon>
        <taxon>Streptophyta</taxon>
        <taxon>Embryophyta</taxon>
        <taxon>Tracheophyta</taxon>
        <taxon>Spermatophyta</taxon>
        <taxon>Magnoliopsida</taxon>
        <taxon>Liliopsida</taxon>
        <taxon>Poales</taxon>
        <taxon>Poaceae</taxon>
        <taxon>BOP clade</taxon>
        <taxon>Pooideae</taxon>
        <taxon>Poodae</taxon>
        <taxon>Poeae</taxon>
        <taxon>Poeae Chloroplast Group 1 (Aveneae type)</taxon>
        <taxon>Aveninae</taxon>
        <taxon>Avena</taxon>
    </lineage>
</organism>
<proteinExistence type="evidence at protein level"/>
<protein>
    <recommendedName>
        <fullName>Chlorophyll synthase, chloroplastic</fullName>
        <ecNumber>2.5.1.62</ecNumber>
    </recommendedName>
    <alternativeName>
        <fullName>Polyprenyl transferase</fullName>
    </alternativeName>
</protein>
<evidence type="ECO:0000255" key="1"/>
<evidence type="ECO:0000269" key="2">
    <source>
    </source>
</evidence>
<evidence type="ECO:0000269" key="3">
    <source>
    </source>
</evidence>
<evidence type="ECO:0000305" key="4"/>
<gene>
    <name type="primary">CHLG</name>
</gene>
<keyword id="KW-0149">Chlorophyll biosynthesis</keyword>
<keyword id="KW-0150">Chloroplast</keyword>
<keyword id="KW-0472">Membrane</keyword>
<keyword id="KW-0934">Plastid</keyword>
<keyword id="KW-0808">Transferase</keyword>
<keyword id="KW-0809">Transit peptide</keyword>
<keyword id="KW-0812">Transmembrane</keyword>
<keyword id="KW-1133">Transmembrane helix</keyword>
<sequence length="378" mass="40764">MATSHPLAAAAATSSSSATFRPPLRFLSSPPSSLTLNRRRSFPVVCAADADAKETTKKPTIPDKAPAAGSSFNQLLGIKGAKQETNIWKIRLQLTKPVTWPPLVWGVLCGAAASGNFHWTVEDVTKSIVCMLMSGPCLTGYTQTINDWYDRDIDAINEPYRPIPSGAISENEVITQIWVLLLGGLGLGALLDIWAGHDFPIIFYLALGGSLLSYIYSAPPLKLKQNGWIGNFALGASYIGLPWWAGQALFGTLTPDIVVLTCLYSIAGLGIAIVNDFKSIEGDRTLGLQSLPVAFGMETAKWICVGAIDITQLSVAAYLLSTGKLYYALALLGLTIPQVILQFQYFLKDPVKYDVKYQASAQPFFVFGLLVTALATSH</sequence>